<organism>
    <name type="scientific">Canine adenovirus serotype 1 (strain CLL)</name>
    <name type="common">CAdV-1</name>
    <name type="synonym">Canine adenovirus 1 (strain CLL)</name>
    <dbReference type="NCBI Taxonomy" id="69150"/>
    <lineage>
        <taxon>Viruses</taxon>
        <taxon>Varidnaviria</taxon>
        <taxon>Bamfordvirae</taxon>
        <taxon>Preplasmiviricota</taxon>
        <taxon>Tectiliviricetes</taxon>
        <taxon>Rowavirales</taxon>
        <taxon>Adenoviridae</taxon>
        <taxon>Mastadenovirus</taxon>
        <taxon>Canine mastadenovirus A</taxon>
    </lineage>
</organism>
<protein>
    <recommendedName>
        <fullName evidence="1">Packaging protein 1</fullName>
    </recommendedName>
    <alternativeName>
        <fullName evidence="1">Packaging protein IVa2</fullName>
    </alternativeName>
</protein>
<gene>
    <name evidence="1" type="primary">IVa2</name>
</gene>
<sequence>MEEKAGLRHLQNQQNEPSQDPHQCADPCPALHSDRNHLNKEAEAMEGQNPTCSRHESAYPIQSQVSKSKKQRNYVDGAAVDDLKNLWDRLQTLQQSLTEMPYAEGLKPLKNFTSFEELLSMGGDSLLNDLLDIQDSITQCCIRASKYLNKEGNCTSLNYYKQPFIAAVYGPTGCGKSQLLRNLMSAQLIVPTPETVFFITPQVDMIPPQEIAAWETQICEGNFLAGPENTVVPQSGSIMPRFIQMSYAQLTKDENYDVTSPNNIFANAASKGPIAIVMDECMEDLGGNRGIAKFFHAFPSKLLDRFPKCTGYSVIVVLHNMNPRRDQGGNIANLKIQAKVHMISPKVHPSQLNRFINIYTKGQPTAISLLLKDIFNYHRLNTNFDWIVYNTEPIDNCMHWMYLSPQEGLIPMYLNIQGKLYQALERIHRTLTDRQRWTRYYHSKKK</sequence>
<accession>Q65945</accession>
<proteinExistence type="inferred from homology"/>
<evidence type="ECO:0000255" key="1">
    <source>
        <dbReference type="HAMAP-Rule" id="MF_04057"/>
    </source>
</evidence>
<evidence type="ECO:0000256" key="2">
    <source>
        <dbReference type="SAM" id="MobiDB-lite"/>
    </source>
</evidence>
<dbReference type="EMBL" id="U55001">
    <property type="protein sequence ID" value="AAB05433.1"/>
    <property type="molecule type" value="Genomic_DNA"/>
</dbReference>
<dbReference type="GO" id="GO:0044196">
    <property type="term" value="C:host cell nucleolus"/>
    <property type="evidence" value="ECO:0007669"/>
    <property type="project" value="UniProtKB-SubCell"/>
</dbReference>
<dbReference type="GO" id="GO:0044095">
    <property type="term" value="C:host cell nucleoplasm"/>
    <property type="evidence" value="ECO:0007669"/>
    <property type="project" value="UniProtKB-SubCell"/>
</dbReference>
<dbReference type="GO" id="GO:0044423">
    <property type="term" value="C:virion component"/>
    <property type="evidence" value="ECO:0007669"/>
    <property type="project" value="UniProtKB-UniRule"/>
</dbReference>
<dbReference type="GO" id="GO:0005524">
    <property type="term" value="F:ATP binding"/>
    <property type="evidence" value="ECO:0007669"/>
    <property type="project" value="UniProtKB-UniRule"/>
</dbReference>
<dbReference type="GO" id="GO:0003677">
    <property type="term" value="F:DNA binding"/>
    <property type="evidence" value="ECO:0007669"/>
    <property type="project" value="UniProtKB-UniRule"/>
</dbReference>
<dbReference type="GO" id="GO:0006351">
    <property type="term" value="P:DNA-templated transcription"/>
    <property type="evidence" value="ECO:0007669"/>
    <property type="project" value="UniProtKB-UniRule"/>
</dbReference>
<dbReference type="GO" id="GO:0039708">
    <property type="term" value="P:nuclear capsid assembly"/>
    <property type="evidence" value="ECO:0007669"/>
    <property type="project" value="UniProtKB-UniRule"/>
</dbReference>
<dbReference type="GO" id="GO:0006355">
    <property type="term" value="P:regulation of DNA-templated transcription"/>
    <property type="evidence" value="ECO:0007669"/>
    <property type="project" value="UniProtKB-UniRule"/>
</dbReference>
<dbReference type="GO" id="GO:0098035">
    <property type="term" value="P:viral DNA genome packaging via site-specific sequence recognition"/>
    <property type="evidence" value="ECO:0007669"/>
    <property type="project" value="UniProtKB-UniRule"/>
</dbReference>
<dbReference type="GO" id="GO:0019076">
    <property type="term" value="P:viral release from host cell"/>
    <property type="evidence" value="ECO:0007669"/>
    <property type="project" value="UniProtKB-UniRule"/>
</dbReference>
<dbReference type="GO" id="GO:0019083">
    <property type="term" value="P:viral transcription"/>
    <property type="evidence" value="ECO:0007669"/>
    <property type="project" value="UniProtKB-UniRule"/>
</dbReference>
<dbReference type="HAMAP" id="MF_04057">
    <property type="entry name" value="ADV_PKG1"/>
    <property type="match status" value="1"/>
</dbReference>
<dbReference type="InterPro" id="IPR003389">
    <property type="entry name" value="Adeno_IVa2"/>
</dbReference>
<dbReference type="InterPro" id="IPR027417">
    <property type="entry name" value="P-loop_NTPase"/>
</dbReference>
<dbReference type="Pfam" id="PF02456">
    <property type="entry name" value="Adeno_IVa2"/>
    <property type="match status" value="1"/>
</dbReference>
<dbReference type="SUPFAM" id="SSF52540">
    <property type="entry name" value="P-loop containing nucleoside triphosphate hydrolases"/>
    <property type="match status" value="1"/>
</dbReference>
<feature type="chain" id="PRO_0000221888" description="Packaging protein 1">
    <location>
        <begin position="1"/>
        <end position="446"/>
    </location>
</feature>
<feature type="region of interest" description="Disordered" evidence="2">
    <location>
        <begin position="1"/>
        <end position="72"/>
    </location>
</feature>
<feature type="region of interest" description="DNA-binding" evidence="1">
    <location>
        <begin position="439"/>
        <end position="446"/>
    </location>
</feature>
<feature type="compositionally biased region" description="Polar residues" evidence="2">
    <location>
        <begin position="10"/>
        <end position="21"/>
    </location>
</feature>
<feature type="compositionally biased region" description="Basic and acidic residues" evidence="2">
    <location>
        <begin position="32"/>
        <end position="43"/>
    </location>
</feature>
<feature type="binding site" evidence="1">
    <location>
        <begin position="170"/>
        <end position="177"/>
    </location>
    <ligand>
        <name>ATP</name>
        <dbReference type="ChEBI" id="CHEBI:30616"/>
    </ligand>
</feature>
<organismHost>
    <name type="scientific">Canis lupus familiaris</name>
    <name type="common">Dog</name>
    <name type="synonym">Canis familiaris</name>
    <dbReference type="NCBI Taxonomy" id="9615"/>
</organismHost>
<keyword id="KW-0010">Activator</keyword>
<keyword id="KW-0067">ATP-binding</keyword>
<keyword id="KW-0238">DNA-binding</keyword>
<keyword id="KW-1048">Host nucleus</keyword>
<keyword id="KW-0547">Nucleotide-binding</keyword>
<keyword id="KW-0597">Phosphoprotein</keyword>
<keyword id="KW-0804">Transcription</keyword>
<keyword id="KW-0805">Transcription regulation</keyword>
<keyword id="KW-0231">Viral genome packaging</keyword>
<keyword id="KW-1188">Viral release from host cell</keyword>
<keyword id="KW-0946">Virion</keyword>
<comment type="function">
    <text evidence="1">Component of the packaging machinery which encapsidates the viral DNA into preformed capsids and transcriptional activator of the viral major late promoter (MLP). Binds, along with packaging proteins 2 and 3, to the specific packaging sequence on the left end of viral genomic DNA and displays ATPase activity thereby providing the power stroke of the packaging machinery. The activity of packaging protein IVa2 is stimulated by protein 33K which acts as a terminase. May be the protein that pumps DNA into the capsid powered by ATP hydrolysis. Specifically binds to the 5'-CG-3' nucleotides of the repeats making up the packaging sequence. Component of the DEF-A and DEF-B transcription factors that bind downstream elements of the major late promoter (MLP), and stimulate transcription from the MLP after initiation of viral DNA replication. DEF-A is a heterodimer packaging proteins 1 and 2 and DEF-B is a homodimer of packaging protein 1.</text>
</comment>
<comment type="subunit">
    <text evidence="1">Homodimer. Part of a genome packaging complex composed of packaging proteins 1, 2 and 3; this complex specifically binds to the packaging sequence on the left end of viral genomic DNA and performs packaging of the viral genome. Interacts with protein 33K.</text>
</comment>
<comment type="subcellular location">
    <subcellularLocation>
        <location evidence="1">Virion</location>
    </subcellularLocation>
    <subcellularLocation>
        <location evidence="1">Host nucleus</location>
        <location evidence="1">Host nucleoplasm</location>
    </subcellularLocation>
    <subcellularLocation>
        <location evidence="1">Host nucleus</location>
        <location evidence="1">Host nucleolus</location>
    </subcellularLocation>
    <text evidence="1">Located at a unique vertex of the capsid. Present in about 6-8 copies per virion.</text>
</comment>
<comment type="induction">
    <text evidence="1">Expressed in the intermediate phase of the viral replicative cycle.</text>
</comment>
<comment type="similarity">
    <text evidence="1">Belongs to the adenoviridae packaging protein 1 family.</text>
</comment>
<reference key="1">
    <citation type="submission" date="1996-08" db="EMBL/GenBank/DDBJ databases">
        <title>DNA sequence and genomic organization of canine adenovirus type 1.</title>
        <authorList>
            <person name="Campbell J.B."/>
            <person name="Zhao Y."/>
        </authorList>
    </citation>
    <scope>NUCLEOTIDE SEQUENCE [LARGE SCALE GENOMIC DNA]</scope>
</reference>
<name>PKG1_ADECC</name>